<feature type="signal peptide" description="Tat-type signal" evidence="1">
    <location>
        <begin position="1"/>
        <end position="31"/>
    </location>
</feature>
<feature type="chain" id="PRO_1000186354" description="Periplasmic nitrate reductase" evidence="1">
    <location>
        <begin position="32"/>
        <end position="828"/>
    </location>
</feature>
<feature type="domain" description="4Fe-4S Mo/W bis-MGD-type" evidence="1">
    <location>
        <begin position="39"/>
        <end position="95"/>
    </location>
</feature>
<feature type="binding site" evidence="1">
    <location>
        <position position="46"/>
    </location>
    <ligand>
        <name>[4Fe-4S] cluster</name>
        <dbReference type="ChEBI" id="CHEBI:49883"/>
    </ligand>
</feature>
<feature type="binding site" evidence="1">
    <location>
        <position position="49"/>
    </location>
    <ligand>
        <name>[4Fe-4S] cluster</name>
        <dbReference type="ChEBI" id="CHEBI:49883"/>
    </ligand>
</feature>
<feature type="binding site" evidence="1">
    <location>
        <position position="53"/>
    </location>
    <ligand>
        <name>[4Fe-4S] cluster</name>
        <dbReference type="ChEBI" id="CHEBI:49883"/>
    </ligand>
</feature>
<feature type="binding site" evidence="1">
    <location>
        <position position="81"/>
    </location>
    <ligand>
        <name>[4Fe-4S] cluster</name>
        <dbReference type="ChEBI" id="CHEBI:49883"/>
    </ligand>
</feature>
<feature type="binding site" evidence="1">
    <location>
        <position position="83"/>
    </location>
    <ligand>
        <name>Mo-bis(molybdopterin guanine dinucleotide)</name>
        <dbReference type="ChEBI" id="CHEBI:60539"/>
    </ligand>
</feature>
<feature type="binding site" evidence="1">
    <location>
        <position position="150"/>
    </location>
    <ligand>
        <name>Mo-bis(molybdopterin guanine dinucleotide)</name>
        <dbReference type="ChEBI" id="CHEBI:60539"/>
    </ligand>
</feature>
<feature type="binding site" evidence="1">
    <location>
        <position position="175"/>
    </location>
    <ligand>
        <name>Mo-bis(molybdopterin guanine dinucleotide)</name>
        <dbReference type="ChEBI" id="CHEBI:60539"/>
    </ligand>
</feature>
<feature type="binding site" evidence="1">
    <location>
        <position position="179"/>
    </location>
    <ligand>
        <name>Mo-bis(molybdopterin guanine dinucleotide)</name>
        <dbReference type="ChEBI" id="CHEBI:60539"/>
    </ligand>
</feature>
<feature type="binding site" evidence="1">
    <location>
        <begin position="212"/>
        <end position="219"/>
    </location>
    <ligand>
        <name>Mo-bis(molybdopterin guanine dinucleotide)</name>
        <dbReference type="ChEBI" id="CHEBI:60539"/>
    </ligand>
</feature>
<feature type="binding site" evidence="1">
    <location>
        <begin position="243"/>
        <end position="247"/>
    </location>
    <ligand>
        <name>Mo-bis(molybdopterin guanine dinucleotide)</name>
        <dbReference type="ChEBI" id="CHEBI:60539"/>
    </ligand>
</feature>
<feature type="binding site" evidence="1">
    <location>
        <begin position="262"/>
        <end position="264"/>
    </location>
    <ligand>
        <name>Mo-bis(molybdopterin guanine dinucleotide)</name>
        <dbReference type="ChEBI" id="CHEBI:60539"/>
    </ligand>
</feature>
<feature type="binding site" evidence="1">
    <location>
        <position position="372"/>
    </location>
    <ligand>
        <name>Mo-bis(molybdopterin guanine dinucleotide)</name>
        <dbReference type="ChEBI" id="CHEBI:60539"/>
    </ligand>
</feature>
<feature type="binding site" evidence="1">
    <location>
        <position position="376"/>
    </location>
    <ligand>
        <name>Mo-bis(molybdopterin guanine dinucleotide)</name>
        <dbReference type="ChEBI" id="CHEBI:60539"/>
    </ligand>
</feature>
<feature type="binding site" evidence="1">
    <location>
        <position position="482"/>
    </location>
    <ligand>
        <name>Mo-bis(molybdopterin guanine dinucleotide)</name>
        <dbReference type="ChEBI" id="CHEBI:60539"/>
    </ligand>
</feature>
<feature type="binding site" evidence="1">
    <location>
        <begin position="508"/>
        <end position="509"/>
    </location>
    <ligand>
        <name>Mo-bis(molybdopterin guanine dinucleotide)</name>
        <dbReference type="ChEBI" id="CHEBI:60539"/>
    </ligand>
</feature>
<feature type="binding site" evidence="1">
    <location>
        <position position="531"/>
    </location>
    <ligand>
        <name>Mo-bis(molybdopterin guanine dinucleotide)</name>
        <dbReference type="ChEBI" id="CHEBI:60539"/>
    </ligand>
</feature>
<feature type="binding site" evidence="1">
    <location>
        <position position="558"/>
    </location>
    <ligand>
        <name>Mo-bis(molybdopterin guanine dinucleotide)</name>
        <dbReference type="ChEBI" id="CHEBI:60539"/>
    </ligand>
</feature>
<feature type="binding site" evidence="1">
    <location>
        <begin position="718"/>
        <end position="727"/>
    </location>
    <ligand>
        <name>Mo-bis(molybdopterin guanine dinucleotide)</name>
        <dbReference type="ChEBI" id="CHEBI:60539"/>
    </ligand>
</feature>
<feature type="binding site" evidence="1">
    <location>
        <position position="794"/>
    </location>
    <ligand>
        <name>substrate</name>
    </ligand>
</feature>
<feature type="binding site" evidence="1">
    <location>
        <position position="802"/>
    </location>
    <ligand>
        <name>Mo-bis(molybdopterin guanine dinucleotide)</name>
        <dbReference type="ChEBI" id="CHEBI:60539"/>
    </ligand>
</feature>
<feature type="binding site" evidence="1">
    <location>
        <position position="819"/>
    </location>
    <ligand>
        <name>Mo-bis(molybdopterin guanine dinucleotide)</name>
        <dbReference type="ChEBI" id="CHEBI:60539"/>
    </ligand>
</feature>
<proteinExistence type="inferred from homology"/>
<comment type="function">
    <text evidence="1">Catalytic subunit of the periplasmic nitrate reductase complex NapAB. Receives electrons from NapB and catalyzes the reduction of nitrate to nitrite.</text>
</comment>
<comment type="catalytic activity">
    <reaction evidence="1">
        <text>2 Fe(II)-[cytochrome] + nitrate + 2 H(+) = 2 Fe(III)-[cytochrome] + nitrite + H2O</text>
        <dbReference type="Rhea" id="RHEA:12909"/>
        <dbReference type="Rhea" id="RHEA-COMP:11777"/>
        <dbReference type="Rhea" id="RHEA-COMP:11778"/>
        <dbReference type="ChEBI" id="CHEBI:15377"/>
        <dbReference type="ChEBI" id="CHEBI:15378"/>
        <dbReference type="ChEBI" id="CHEBI:16301"/>
        <dbReference type="ChEBI" id="CHEBI:17632"/>
        <dbReference type="ChEBI" id="CHEBI:29033"/>
        <dbReference type="ChEBI" id="CHEBI:29034"/>
        <dbReference type="EC" id="1.9.6.1"/>
    </reaction>
</comment>
<comment type="cofactor">
    <cofactor evidence="1">
        <name>[4Fe-4S] cluster</name>
        <dbReference type="ChEBI" id="CHEBI:49883"/>
    </cofactor>
    <text evidence="1">Binds 1 [4Fe-4S] cluster.</text>
</comment>
<comment type="cofactor">
    <cofactor evidence="1">
        <name>Mo-bis(molybdopterin guanine dinucleotide)</name>
        <dbReference type="ChEBI" id="CHEBI:60539"/>
    </cofactor>
    <text evidence="1">Binds 1 molybdenum-bis(molybdopterin guanine dinucleotide) (Mo-bis-MGD) cofactor per subunit.</text>
</comment>
<comment type="subunit">
    <text evidence="1">Component of the periplasmic nitrate reductase NapAB complex composed of NapA and NapB.</text>
</comment>
<comment type="subcellular location">
    <subcellularLocation>
        <location evidence="1">Periplasm</location>
    </subcellularLocation>
</comment>
<comment type="PTM">
    <text evidence="1">Predicted to be exported by the Tat system. The position of the signal peptide cleavage has not been experimentally proven.</text>
</comment>
<comment type="similarity">
    <text evidence="1">Belongs to the prokaryotic molybdopterin-containing oxidoreductase family. NasA/NapA/NarB subfamily.</text>
</comment>
<reference key="1">
    <citation type="journal article" date="2009" name="PLoS Genet.">
        <title>Organised genome dynamics in the Escherichia coli species results in highly diverse adaptive paths.</title>
        <authorList>
            <person name="Touchon M."/>
            <person name="Hoede C."/>
            <person name="Tenaillon O."/>
            <person name="Barbe V."/>
            <person name="Baeriswyl S."/>
            <person name="Bidet P."/>
            <person name="Bingen E."/>
            <person name="Bonacorsi S."/>
            <person name="Bouchier C."/>
            <person name="Bouvet O."/>
            <person name="Calteau A."/>
            <person name="Chiapello H."/>
            <person name="Clermont O."/>
            <person name="Cruveiller S."/>
            <person name="Danchin A."/>
            <person name="Diard M."/>
            <person name="Dossat C."/>
            <person name="Karoui M.E."/>
            <person name="Frapy E."/>
            <person name="Garry L."/>
            <person name="Ghigo J.M."/>
            <person name="Gilles A.M."/>
            <person name="Johnson J."/>
            <person name="Le Bouguenec C."/>
            <person name="Lescat M."/>
            <person name="Mangenot S."/>
            <person name="Martinez-Jehanne V."/>
            <person name="Matic I."/>
            <person name="Nassif X."/>
            <person name="Oztas S."/>
            <person name="Petit M.A."/>
            <person name="Pichon C."/>
            <person name="Rouy Z."/>
            <person name="Ruf C.S."/>
            <person name="Schneider D."/>
            <person name="Tourret J."/>
            <person name="Vacherie B."/>
            <person name="Vallenet D."/>
            <person name="Medigue C."/>
            <person name="Rocha E.P.C."/>
            <person name="Denamur E."/>
        </authorList>
    </citation>
    <scope>NUCLEOTIDE SEQUENCE [LARGE SCALE GENOMIC DNA]</scope>
    <source>
        <strain>S88 / ExPEC</strain>
    </source>
</reference>
<accession>B7MFB8</accession>
<evidence type="ECO:0000255" key="1">
    <source>
        <dbReference type="HAMAP-Rule" id="MF_01630"/>
    </source>
</evidence>
<protein>
    <recommendedName>
        <fullName evidence="1">Periplasmic nitrate reductase</fullName>
        <ecNumber evidence="1">1.9.6.1</ecNumber>
    </recommendedName>
</protein>
<organism>
    <name type="scientific">Escherichia coli O45:K1 (strain S88 / ExPEC)</name>
    <dbReference type="NCBI Taxonomy" id="585035"/>
    <lineage>
        <taxon>Bacteria</taxon>
        <taxon>Pseudomonadati</taxon>
        <taxon>Pseudomonadota</taxon>
        <taxon>Gammaproteobacteria</taxon>
        <taxon>Enterobacterales</taxon>
        <taxon>Enterobacteriaceae</taxon>
        <taxon>Escherichia</taxon>
    </lineage>
</organism>
<sequence length="828" mass="93058">MKLSRRSFMKANAVAAAAAAAGLSVPGVARAVVGQQEAIKWDKAPCRFCGTGCGVLVGTQQGRVVACQGDPDAPVNRGLNCIKGYFLPKIMYGKDRLTQPLLRMKNGKYDKEGEFTPITWDQAFDVMEDKFKTALKEKGPESIGMFGSGQWTIWEGYAASKLFKAGFRSNNIDPNARHCMASAVVGFMRTFGMDEPMGCYDDIEQADAFVLWGSNMAEMHPILWSRITNRRLSNQNVTVAVLSTYQHRSFELADNGIIFTPQSDLVILNYIANYIIQNNAINQDFFSKHVNLRKGATDIGYGLRPTHPLEKAAKNPGSDASEPMSFEDYKAFVAEYTLEKTAEMTGVPKDQLEQLAQLYADPNKKVISYWTMGFNQHTRGVWANNLVYNLHLLTGKISQPGCGPFSLTGQPSACGTAREVGTFAHRLPADMVVTNEKHRDICEKKWNIPSGTIPAKIGLHAVAQDRALKDGKLNVYWTMCTNNMQAGPNINEERMPGWRDPRNFIIVSDPYPTVSALAADLILPTAMWVEKEGAYGNAERRTQFWRQQVQAPGEAKSDLWQLVQFSRRFKTEEVWPEELLAKKPELRGKTLYEVLYATPEVSKFPVSELAEDQLNDESRELGFYLQKGLFEEYAWFGRGHGHDLAPFDDYHKARGLRWPVVNGKETQWRYSEGNDPYVKAGEGYKFYGKPDGKAVIFALPFEPAAEAPDEEYDLWLSTGRVLEHWHTGSMTRRVPELHRAFPEAVLFIHPLDAKARDLRRGDKVKVVSRRGEVISIVETRGRNRPPQGLVYMPFFDAAQLVNKLTLDATDPLSKETDFKKCAVKLEKV</sequence>
<gene>
    <name evidence="1" type="primary">napA</name>
    <name type="ordered locus">ECS88_2353</name>
</gene>
<dbReference type="EC" id="1.9.6.1" evidence="1"/>
<dbReference type="EMBL" id="CU928161">
    <property type="protein sequence ID" value="CAR03634.1"/>
    <property type="molecule type" value="Genomic_DNA"/>
</dbReference>
<dbReference type="RefSeq" id="WP_000778044.1">
    <property type="nucleotide sequence ID" value="NC_011742.1"/>
</dbReference>
<dbReference type="SMR" id="B7MFB8"/>
<dbReference type="KEGG" id="ecz:ECS88_2353"/>
<dbReference type="HOGENOM" id="CLU_000422_13_4_6"/>
<dbReference type="Proteomes" id="UP000000747">
    <property type="component" value="Chromosome"/>
</dbReference>
<dbReference type="GO" id="GO:0016020">
    <property type="term" value="C:membrane"/>
    <property type="evidence" value="ECO:0007669"/>
    <property type="project" value="TreeGrafter"/>
</dbReference>
<dbReference type="GO" id="GO:0009325">
    <property type="term" value="C:nitrate reductase complex"/>
    <property type="evidence" value="ECO:0007669"/>
    <property type="project" value="TreeGrafter"/>
</dbReference>
<dbReference type="GO" id="GO:0042597">
    <property type="term" value="C:periplasmic space"/>
    <property type="evidence" value="ECO:0007669"/>
    <property type="project" value="UniProtKB-SubCell"/>
</dbReference>
<dbReference type="GO" id="GO:0051539">
    <property type="term" value="F:4 iron, 4 sulfur cluster binding"/>
    <property type="evidence" value="ECO:0007669"/>
    <property type="project" value="UniProtKB-KW"/>
</dbReference>
<dbReference type="GO" id="GO:0009055">
    <property type="term" value="F:electron transfer activity"/>
    <property type="evidence" value="ECO:0007669"/>
    <property type="project" value="UniProtKB-UniRule"/>
</dbReference>
<dbReference type="GO" id="GO:0005506">
    <property type="term" value="F:iron ion binding"/>
    <property type="evidence" value="ECO:0007669"/>
    <property type="project" value="UniProtKB-UniRule"/>
</dbReference>
<dbReference type="GO" id="GO:0030151">
    <property type="term" value="F:molybdenum ion binding"/>
    <property type="evidence" value="ECO:0007669"/>
    <property type="project" value="InterPro"/>
</dbReference>
<dbReference type="GO" id="GO:0043546">
    <property type="term" value="F:molybdopterin cofactor binding"/>
    <property type="evidence" value="ECO:0007669"/>
    <property type="project" value="InterPro"/>
</dbReference>
<dbReference type="GO" id="GO:0050140">
    <property type="term" value="F:nitrate reductase (cytochrome) activity"/>
    <property type="evidence" value="ECO:0007669"/>
    <property type="project" value="UniProtKB-EC"/>
</dbReference>
<dbReference type="GO" id="GO:0045333">
    <property type="term" value="P:cellular respiration"/>
    <property type="evidence" value="ECO:0007669"/>
    <property type="project" value="UniProtKB-ARBA"/>
</dbReference>
<dbReference type="GO" id="GO:0006777">
    <property type="term" value="P:Mo-molybdopterin cofactor biosynthetic process"/>
    <property type="evidence" value="ECO:0007669"/>
    <property type="project" value="UniProtKB-UniRule"/>
</dbReference>
<dbReference type="GO" id="GO:0042128">
    <property type="term" value="P:nitrate assimilation"/>
    <property type="evidence" value="ECO:0007669"/>
    <property type="project" value="UniProtKB-UniRule"/>
</dbReference>
<dbReference type="CDD" id="cd02791">
    <property type="entry name" value="MopB_CT_Nitrate-R-NapA-like"/>
    <property type="match status" value="1"/>
</dbReference>
<dbReference type="CDD" id="cd02754">
    <property type="entry name" value="MopB_Nitrate-R-NapA-like"/>
    <property type="match status" value="1"/>
</dbReference>
<dbReference type="FunFam" id="2.40.40.20:FF:000005">
    <property type="entry name" value="Periplasmic nitrate reductase"/>
    <property type="match status" value="1"/>
</dbReference>
<dbReference type="FunFam" id="3.40.228.10:FF:000001">
    <property type="entry name" value="Periplasmic nitrate reductase"/>
    <property type="match status" value="1"/>
</dbReference>
<dbReference type="Gene3D" id="2.40.40.20">
    <property type="match status" value="1"/>
</dbReference>
<dbReference type="Gene3D" id="3.30.200.210">
    <property type="match status" value="1"/>
</dbReference>
<dbReference type="Gene3D" id="3.40.50.740">
    <property type="match status" value="1"/>
</dbReference>
<dbReference type="Gene3D" id="3.40.228.10">
    <property type="entry name" value="Dimethylsulfoxide Reductase, domain 2"/>
    <property type="match status" value="1"/>
</dbReference>
<dbReference type="HAMAP" id="MF_01630">
    <property type="entry name" value="Nitrate_reduct_NapA"/>
    <property type="match status" value="1"/>
</dbReference>
<dbReference type="InterPro" id="IPR009010">
    <property type="entry name" value="Asp_de-COase-like_dom_sf"/>
</dbReference>
<dbReference type="InterPro" id="IPR041957">
    <property type="entry name" value="CT_Nitrate-R-NapA-like"/>
</dbReference>
<dbReference type="InterPro" id="IPR006657">
    <property type="entry name" value="MoPterin_dinucl-bd_dom"/>
</dbReference>
<dbReference type="InterPro" id="IPR006656">
    <property type="entry name" value="Mopterin_OxRdtase"/>
</dbReference>
<dbReference type="InterPro" id="IPR006963">
    <property type="entry name" value="Mopterin_OxRdtase_4Fe-4S_dom"/>
</dbReference>
<dbReference type="InterPro" id="IPR027467">
    <property type="entry name" value="MopterinOxRdtase_cofactor_BS"/>
</dbReference>
<dbReference type="InterPro" id="IPR010051">
    <property type="entry name" value="Periplasm_NO3_reductase_lsu"/>
</dbReference>
<dbReference type="InterPro" id="IPR050123">
    <property type="entry name" value="Prok_molybdopt-oxidoreductase"/>
</dbReference>
<dbReference type="InterPro" id="IPR006311">
    <property type="entry name" value="TAT_signal"/>
</dbReference>
<dbReference type="InterPro" id="IPR019546">
    <property type="entry name" value="TAT_signal_bac_arc"/>
</dbReference>
<dbReference type="NCBIfam" id="TIGR01706">
    <property type="entry name" value="NAPA"/>
    <property type="match status" value="1"/>
</dbReference>
<dbReference type="NCBIfam" id="NF010055">
    <property type="entry name" value="PRK13532.1"/>
    <property type="match status" value="1"/>
</dbReference>
<dbReference type="NCBIfam" id="TIGR01409">
    <property type="entry name" value="TAT_signal_seq"/>
    <property type="match status" value="1"/>
</dbReference>
<dbReference type="PANTHER" id="PTHR43105:SF11">
    <property type="entry name" value="PERIPLASMIC NITRATE REDUCTASE"/>
    <property type="match status" value="1"/>
</dbReference>
<dbReference type="PANTHER" id="PTHR43105">
    <property type="entry name" value="RESPIRATORY NITRATE REDUCTASE"/>
    <property type="match status" value="1"/>
</dbReference>
<dbReference type="Pfam" id="PF04879">
    <property type="entry name" value="Molybdop_Fe4S4"/>
    <property type="match status" value="1"/>
</dbReference>
<dbReference type="Pfam" id="PF00384">
    <property type="entry name" value="Molybdopterin"/>
    <property type="match status" value="1"/>
</dbReference>
<dbReference type="Pfam" id="PF01568">
    <property type="entry name" value="Molydop_binding"/>
    <property type="match status" value="1"/>
</dbReference>
<dbReference type="SMART" id="SM00926">
    <property type="entry name" value="Molybdop_Fe4S4"/>
    <property type="match status" value="1"/>
</dbReference>
<dbReference type="SUPFAM" id="SSF50692">
    <property type="entry name" value="ADC-like"/>
    <property type="match status" value="1"/>
</dbReference>
<dbReference type="SUPFAM" id="SSF53706">
    <property type="entry name" value="Formate dehydrogenase/DMSO reductase, domains 1-3"/>
    <property type="match status" value="1"/>
</dbReference>
<dbReference type="PROSITE" id="PS51669">
    <property type="entry name" value="4FE4S_MOW_BIS_MGD"/>
    <property type="match status" value="1"/>
</dbReference>
<dbReference type="PROSITE" id="PS00551">
    <property type="entry name" value="MOLYBDOPTERIN_PROK_1"/>
    <property type="match status" value="1"/>
</dbReference>
<dbReference type="PROSITE" id="PS51318">
    <property type="entry name" value="TAT"/>
    <property type="match status" value="1"/>
</dbReference>
<keyword id="KW-0004">4Fe-4S</keyword>
<keyword id="KW-0249">Electron transport</keyword>
<keyword id="KW-0408">Iron</keyword>
<keyword id="KW-0411">Iron-sulfur</keyword>
<keyword id="KW-0479">Metal-binding</keyword>
<keyword id="KW-0500">Molybdenum</keyword>
<keyword id="KW-0534">Nitrate assimilation</keyword>
<keyword id="KW-0560">Oxidoreductase</keyword>
<keyword id="KW-0574">Periplasm</keyword>
<keyword id="KW-1185">Reference proteome</keyword>
<keyword id="KW-0732">Signal</keyword>
<keyword id="KW-0813">Transport</keyword>
<name>NAPA_ECO45</name>